<proteinExistence type="evidence at protein level"/>
<gene>
    <name type="primary">Leprot</name>
    <name type="synonym">Lepr</name>
    <name type="synonym">Obr</name>
</gene>
<protein>
    <recommendedName>
        <fullName>Leptin receptor gene-related protein</fullName>
    </recommendedName>
    <alternativeName>
        <fullName>Endospanin-1</fullName>
    </alternativeName>
    <alternativeName>
        <fullName>OB-R gene-related protein</fullName>
        <shortName>OB-RGRP</shortName>
    </alternativeName>
</protein>
<reference key="1">
    <citation type="journal article" date="1997" name="Nucleic Acids Res.">
        <title>The leptin receptor promoter controls expression of a second distinct protein.</title>
        <authorList>
            <person name="Bailleul B."/>
            <person name="Akerblom I."/>
            <person name="Strosberg A.D."/>
        </authorList>
    </citation>
    <scope>NUCLEOTIDE SEQUENCE [MRNA] (ISOFORM 1)</scope>
</reference>
<reference key="2">
    <citation type="journal article" date="2005" name="Science">
        <title>The transcriptional landscape of the mammalian genome.</title>
        <authorList>
            <person name="Carninci P."/>
            <person name="Kasukawa T."/>
            <person name="Katayama S."/>
            <person name="Gough J."/>
            <person name="Frith M.C."/>
            <person name="Maeda N."/>
            <person name="Oyama R."/>
            <person name="Ravasi T."/>
            <person name="Lenhard B."/>
            <person name="Wells C."/>
            <person name="Kodzius R."/>
            <person name="Shimokawa K."/>
            <person name="Bajic V.B."/>
            <person name="Brenner S.E."/>
            <person name="Batalov S."/>
            <person name="Forrest A.R."/>
            <person name="Zavolan M."/>
            <person name="Davis M.J."/>
            <person name="Wilming L.G."/>
            <person name="Aidinis V."/>
            <person name="Allen J.E."/>
            <person name="Ambesi-Impiombato A."/>
            <person name="Apweiler R."/>
            <person name="Aturaliya R.N."/>
            <person name="Bailey T.L."/>
            <person name="Bansal M."/>
            <person name="Baxter L."/>
            <person name="Beisel K.W."/>
            <person name="Bersano T."/>
            <person name="Bono H."/>
            <person name="Chalk A.M."/>
            <person name="Chiu K.P."/>
            <person name="Choudhary V."/>
            <person name="Christoffels A."/>
            <person name="Clutterbuck D.R."/>
            <person name="Crowe M.L."/>
            <person name="Dalla E."/>
            <person name="Dalrymple B.P."/>
            <person name="de Bono B."/>
            <person name="Della Gatta G."/>
            <person name="di Bernardo D."/>
            <person name="Down T."/>
            <person name="Engstrom P."/>
            <person name="Fagiolini M."/>
            <person name="Faulkner G."/>
            <person name="Fletcher C.F."/>
            <person name="Fukushima T."/>
            <person name="Furuno M."/>
            <person name="Futaki S."/>
            <person name="Gariboldi M."/>
            <person name="Georgii-Hemming P."/>
            <person name="Gingeras T.R."/>
            <person name="Gojobori T."/>
            <person name="Green R.E."/>
            <person name="Gustincich S."/>
            <person name="Harbers M."/>
            <person name="Hayashi Y."/>
            <person name="Hensch T.K."/>
            <person name="Hirokawa N."/>
            <person name="Hill D."/>
            <person name="Huminiecki L."/>
            <person name="Iacono M."/>
            <person name="Ikeo K."/>
            <person name="Iwama A."/>
            <person name="Ishikawa T."/>
            <person name="Jakt M."/>
            <person name="Kanapin A."/>
            <person name="Katoh M."/>
            <person name="Kawasawa Y."/>
            <person name="Kelso J."/>
            <person name="Kitamura H."/>
            <person name="Kitano H."/>
            <person name="Kollias G."/>
            <person name="Krishnan S.P."/>
            <person name="Kruger A."/>
            <person name="Kummerfeld S.K."/>
            <person name="Kurochkin I.V."/>
            <person name="Lareau L.F."/>
            <person name="Lazarevic D."/>
            <person name="Lipovich L."/>
            <person name="Liu J."/>
            <person name="Liuni S."/>
            <person name="McWilliam S."/>
            <person name="Madan Babu M."/>
            <person name="Madera M."/>
            <person name="Marchionni L."/>
            <person name="Matsuda H."/>
            <person name="Matsuzawa S."/>
            <person name="Miki H."/>
            <person name="Mignone F."/>
            <person name="Miyake S."/>
            <person name="Morris K."/>
            <person name="Mottagui-Tabar S."/>
            <person name="Mulder N."/>
            <person name="Nakano N."/>
            <person name="Nakauchi H."/>
            <person name="Ng P."/>
            <person name="Nilsson R."/>
            <person name="Nishiguchi S."/>
            <person name="Nishikawa S."/>
            <person name="Nori F."/>
            <person name="Ohara O."/>
            <person name="Okazaki Y."/>
            <person name="Orlando V."/>
            <person name="Pang K.C."/>
            <person name="Pavan W.J."/>
            <person name="Pavesi G."/>
            <person name="Pesole G."/>
            <person name="Petrovsky N."/>
            <person name="Piazza S."/>
            <person name="Reed J."/>
            <person name="Reid J.F."/>
            <person name="Ring B.Z."/>
            <person name="Ringwald M."/>
            <person name="Rost B."/>
            <person name="Ruan Y."/>
            <person name="Salzberg S.L."/>
            <person name="Sandelin A."/>
            <person name="Schneider C."/>
            <person name="Schoenbach C."/>
            <person name="Sekiguchi K."/>
            <person name="Semple C.A."/>
            <person name="Seno S."/>
            <person name="Sessa L."/>
            <person name="Sheng Y."/>
            <person name="Shibata Y."/>
            <person name="Shimada H."/>
            <person name="Shimada K."/>
            <person name="Silva D."/>
            <person name="Sinclair B."/>
            <person name="Sperling S."/>
            <person name="Stupka E."/>
            <person name="Sugiura K."/>
            <person name="Sultana R."/>
            <person name="Takenaka Y."/>
            <person name="Taki K."/>
            <person name="Tammoja K."/>
            <person name="Tan S.L."/>
            <person name="Tang S."/>
            <person name="Taylor M.S."/>
            <person name="Tegner J."/>
            <person name="Teichmann S.A."/>
            <person name="Ueda H.R."/>
            <person name="van Nimwegen E."/>
            <person name="Verardo R."/>
            <person name="Wei C.L."/>
            <person name="Yagi K."/>
            <person name="Yamanishi H."/>
            <person name="Zabarovsky E."/>
            <person name="Zhu S."/>
            <person name="Zimmer A."/>
            <person name="Hide W."/>
            <person name="Bult C."/>
            <person name="Grimmond S.M."/>
            <person name="Teasdale R.D."/>
            <person name="Liu E.T."/>
            <person name="Brusic V."/>
            <person name="Quackenbush J."/>
            <person name="Wahlestedt C."/>
            <person name="Mattick J.S."/>
            <person name="Hume D.A."/>
            <person name="Kai C."/>
            <person name="Sasaki D."/>
            <person name="Tomaru Y."/>
            <person name="Fukuda S."/>
            <person name="Kanamori-Katayama M."/>
            <person name="Suzuki M."/>
            <person name="Aoki J."/>
            <person name="Arakawa T."/>
            <person name="Iida J."/>
            <person name="Imamura K."/>
            <person name="Itoh M."/>
            <person name="Kato T."/>
            <person name="Kawaji H."/>
            <person name="Kawagashira N."/>
            <person name="Kawashima T."/>
            <person name="Kojima M."/>
            <person name="Kondo S."/>
            <person name="Konno H."/>
            <person name="Nakano K."/>
            <person name="Ninomiya N."/>
            <person name="Nishio T."/>
            <person name="Okada M."/>
            <person name="Plessy C."/>
            <person name="Shibata K."/>
            <person name="Shiraki T."/>
            <person name="Suzuki S."/>
            <person name="Tagami M."/>
            <person name="Waki K."/>
            <person name="Watahiki A."/>
            <person name="Okamura-Oho Y."/>
            <person name="Suzuki H."/>
            <person name="Kawai J."/>
            <person name="Hayashizaki Y."/>
        </authorList>
    </citation>
    <scope>NUCLEOTIDE SEQUENCE [LARGE SCALE MRNA] (ISOFORM 1)</scope>
    <source>
        <strain>C57BL/6J</strain>
        <tissue>Diencephalon</tissue>
        <tissue>Embryonic kidney</tissue>
        <tissue>Osteoclast</tissue>
        <tissue>Pancreas</tissue>
        <tissue>Tongue</tissue>
    </source>
</reference>
<reference key="3">
    <citation type="journal article" date="2009" name="PLoS Biol.">
        <title>Lineage-specific biology revealed by a finished genome assembly of the mouse.</title>
        <authorList>
            <person name="Church D.M."/>
            <person name="Goodstadt L."/>
            <person name="Hillier L.W."/>
            <person name="Zody M.C."/>
            <person name="Goldstein S."/>
            <person name="She X."/>
            <person name="Bult C.J."/>
            <person name="Agarwala R."/>
            <person name="Cherry J.L."/>
            <person name="DiCuccio M."/>
            <person name="Hlavina W."/>
            <person name="Kapustin Y."/>
            <person name="Meric P."/>
            <person name="Maglott D."/>
            <person name="Birtle Z."/>
            <person name="Marques A.C."/>
            <person name="Graves T."/>
            <person name="Zhou S."/>
            <person name="Teague B."/>
            <person name="Potamousis K."/>
            <person name="Churas C."/>
            <person name="Place M."/>
            <person name="Herschleb J."/>
            <person name="Runnheim R."/>
            <person name="Forrest D."/>
            <person name="Amos-Landgraf J."/>
            <person name="Schwartz D.C."/>
            <person name="Cheng Z."/>
            <person name="Lindblad-Toh K."/>
            <person name="Eichler E.E."/>
            <person name="Ponting C.P."/>
        </authorList>
    </citation>
    <scope>NUCLEOTIDE SEQUENCE [LARGE SCALE GENOMIC DNA]</scope>
    <source>
        <strain>C57BL/6J</strain>
    </source>
</reference>
<reference key="4">
    <citation type="journal article" date="2004" name="Genome Res.">
        <title>The status, quality, and expansion of the NIH full-length cDNA project: the Mammalian Gene Collection (MGC).</title>
        <authorList>
            <consortium name="The MGC Project Team"/>
        </authorList>
    </citation>
    <scope>NUCLEOTIDE SEQUENCE [LARGE SCALE MRNA] (ISOFORMS 1 AND 2)</scope>
    <source>
        <strain>Czech II</strain>
        <strain>FVB/N</strain>
        <tissue>Mammary tumor</tissue>
    </source>
</reference>
<reference key="5">
    <citation type="journal article" date="2000" name="J. Neuroendocrinol.">
        <title>B219/OB-R 5'-UTR and leptin receptor gene-related protein gene expression in mouse brain and placenta: tissue-specific leptin receptor promoter activity.</title>
        <authorList>
            <person name="Mercer J.G."/>
            <person name="Moar K.M."/>
            <person name="Hoggard N."/>
            <person name="Strosberg A.D."/>
            <person name="Froguel P."/>
            <person name="Bailleul B."/>
        </authorList>
    </citation>
    <scope>TISSUE SPECIFICITY</scope>
</reference>
<reference key="6">
    <citation type="journal article" date="2007" name="Proc. Natl. Acad. Sci. U.S.A.">
        <title>Silencing of OB-RGRP in mouse hypothalamic arcuate nucleus increases leptin receptor signaling and prevents diet-induced obesity.</title>
        <authorList>
            <person name="Couturier C."/>
            <person name="Sarkis C."/>
            <person name="Seron K."/>
            <person name="Belouzard S."/>
            <person name="Chen P."/>
            <person name="Lenain A."/>
            <person name="Corset L."/>
            <person name="Dam J."/>
            <person name="Vauthier V."/>
            <person name="Dubart A."/>
            <person name="Mallet J."/>
            <person name="Froguel P."/>
            <person name="Rouille Y."/>
            <person name="Jockers R."/>
        </authorList>
    </citation>
    <scope>FUNCTION</scope>
    <scope>INTERACTION WITH LEPR</scope>
    <scope>SUBCELLULAR LOCATION</scope>
</reference>
<reference key="7">
    <citation type="journal article" date="2009" name="J. Clin. Invest.">
        <title>LEPROT and LEPROTL1 cooperatively decrease hepatic growth hormone action in mice.</title>
        <authorList>
            <person name="Touvier T."/>
            <person name="Conte-Auriol F."/>
            <person name="Briand O."/>
            <person name="Cudejko C."/>
            <person name="Paumelle R."/>
            <person name="Caron S."/>
            <person name="Bauge E."/>
            <person name="Rouille Y."/>
            <person name="Salles J.P."/>
            <person name="Staels B."/>
            <person name="Bailleul B."/>
        </authorList>
    </citation>
    <scope>FUNCTION</scope>
    <scope>INDUCTION</scope>
</reference>
<name>OBRG_MOUSE</name>
<evidence type="ECO:0000250" key="1"/>
<evidence type="ECO:0000255" key="2"/>
<evidence type="ECO:0000269" key="3">
    <source>
    </source>
</evidence>
<evidence type="ECO:0000269" key="4">
    <source>
    </source>
</evidence>
<evidence type="ECO:0000269" key="5">
    <source>
    </source>
</evidence>
<evidence type="ECO:0000303" key="6">
    <source>
    </source>
</evidence>
<evidence type="ECO:0000305" key="7"/>
<sequence>MAGVKALVALSFSGAIGLTFLMLGCALEDYGVYWPLFVLIFYVISPIPYFIAKRVTYDSDATSSACRELAYFFTTGIVVSAFGLPVVLARVDVIKWGACGLVLAGNAVIFLTIQGFFLVFGRGDDFSWEQW</sequence>
<feature type="chain" id="PRO_0000215195" description="Leptin receptor gene-related protein">
    <location>
        <begin position="1"/>
        <end position="131"/>
    </location>
</feature>
<feature type="transmembrane region" description="Helical" evidence="2">
    <location>
        <begin position="7"/>
        <end position="27"/>
    </location>
</feature>
<feature type="transmembrane region" description="Helical" evidence="2">
    <location>
        <begin position="32"/>
        <end position="52"/>
    </location>
</feature>
<feature type="transmembrane region" description="Helical" evidence="2">
    <location>
        <begin position="69"/>
        <end position="89"/>
    </location>
</feature>
<feature type="transmembrane region" description="Helical" evidence="2">
    <location>
        <begin position="100"/>
        <end position="120"/>
    </location>
</feature>
<feature type="splice variant" id="VSP_039718" description="In isoform 2." evidence="6">
    <location>
        <begin position="33"/>
        <end position="55"/>
    </location>
</feature>
<feature type="sequence conflict" description="In Ref. 2; BAE40464." evidence="7" ref="2">
    <original>I</original>
    <variation>T</variation>
    <location>
        <position position="44"/>
    </location>
</feature>
<feature type="sequence conflict" description="In Ref. 2; BAE35124 and 4; AAH10289." evidence="7" ref="2 4">
    <original>D</original>
    <variation>G</variation>
    <location>
        <position position="92"/>
    </location>
</feature>
<dbReference type="EMBL" id="AJ011565">
    <property type="protein sequence ID" value="CAA09693.1"/>
    <property type="molecule type" value="mRNA"/>
</dbReference>
<dbReference type="EMBL" id="AK009569">
    <property type="protein sequence ID" value="BAB26366.1"/>
    <property type="molecule type" value="mRNA"/>
</dbReference>
<dbReference type="EMBL" id="AK159489">
    <property type="protein sequence ID" value="BAE35124.1"/>
    <property type="molecule type" value="mRNA"/>
</dbReference>
<dbReference type="EMBL" id="AK160453">
    <property type="protein sequence ID" value="BAE35795.1"/>
    <property type="molecule type" value="mRNA"/>
</dbReference>
<dbReference type="EMBL" id="AK165821">
    <property type="protein sequence ID" value="BAE38395.1"/>
    <property type="molecule type" value="mRNA"/>
</dbReference>
<dbReference type="EMBL" id="AK168597">
    <property type="protein sequence ID" value="BAE40464.1"/>
    <property type="molecule type" value="mRNA"/>
</dbReference>
<dbReference type="EMBL" id="AL929373">
    <property type="status" value="NOT_ANNOTATED_CDS"/>
    <property type="molecule type" value="Genomic_DNA"/>
</dbReference>
<dbReference type="EMBL" id="BX323551">
    <property type="status" value="NOT_ANNOTATED_CDS"/>
    <property type="molecule type" value="Genomic_DNA"/>
</dbReference>
<dbReference type="EMBL" id="BC004744">
    <property type="protein sequence ID" value="AAH04744.1"/>
    <property type="molecule type" value="mRNA"/>
</dbReference>
<dbReference type="EMBL" id="BC010289">
    <property type="protein sequence ID" value="AAH10289.1"/>
    <property type="molecule type" value="mRNA"/>
</dbReference>
<dbReference type="CCDS" id="CCDS18396.1">
    <molecule id="O89013-1"/>
</dbReference>
<dbReference type="RefSeq" id="NP_001406342.1">
    <molecule id="O89013-2"/>
    <property type="nucleotide sequence ID" value="NM_001419413.1"/>
</dbReference>
<dbReference type="RefSeq" id="NP_778201.1">
    <molecule id="O89013-1"/>
    <property type="nucleotide sequence ID" value="NM_175036.5"/>
</dbReference>
<dbReference type="FunCoup" id="O89013">
    <property type="interactions" value="2133"/>
</dbReference>
<dbReference type="STRING" id="10090.ENSMUSP00000030254"/>
<dbReference type="SwissPalm" id="O89013"/>
<dbReference type="PaxDb" id="10090-ENSMUSP00000030254"/>
<dbReference type="PeptideAtlas" id="O89013"/>
<dbReference type="ProteomicsDB" id="293825">
    <molecule id="O89013-1"/>
</dbReference>
<dbReference type="Pumba" id="O89013"/>
<dbReference type="Antibodypedia" id="67309">
    <property type="antibodies" value="8 antibodies from 6 providers"/>
</dbReference>
<dbReference type="DNASU" id="230514"/>
<dbReference type="Ensembl" id="ENSMUST00000030254.15">
    <molecule id="O89013-1"/>
    <property type="protein sequence ID" value="ENSMUSP00000030254.9"/>
    <property type="gene ID" value="ENSMUSG00000035212.15"/>
</dbReference>
<dbReference type="Ensembl" id="ENSMUST00000106927.2">
    <molecule id="O89013-2"/>
    <property type="protein sequence ID" value="ENSMUSP00000102540.2"/>
    <property type="gene ID" value="ENSMUSG00000035212.15"/>
</dbReference>
<dbReference type="GeneID" id="230514"/>
<dbReference type="KEGG" id="mmu:230514"/>
<dbReference type="UCSC" id="uc008tvu.1">
    <molecule id="O89013-1"/>
    <property type="organism name" value="mouse"/>
</dbReference>
<dbReference type="UCSC" id="uc008tvv.1">
    <molecule id="O89013-2"/>
    <property type="organism name" value="mouse"/>
</dbReference>
<dbReference type="AGR" id="MGI:2687005"/>
<dbReference type="CTD" id="54741"/>
<dbReference type="MGI" id="MGI:2687005">
    <property type="gene designation" value="Leprot"/>
</dbReference>
<dbReference type="VEuPathDB" id="HostDB:ENSMUSG00000035212"/>
<dbReference type="eggNOG" id="KOG2174">
    <property type="taxonomic scope" value="Eukaryota"/>
</dbReference>
<dbReference type="GeneTree" id="ENSGT00390000006503"/>
<dbReference type="HOGENOM" id="CLU_134810_2_2_1"/>
<dbReference type="InParanoid" id="O89013"/>
<dbReference type="OMA" id="RSHVDMT"/>
<dbReference type="OrthoDB" id="14246at2759"/>
<dbReference type="PhylomeDB" id="O89013"/>
<dbReference type="TreeFam" id="TF313689"/>
<dbReference type="BioGRID-ORCS" id="230514">
    <property type="hits" value="4 hits in 79 CRISPR screens"/>
</dbReference>
<dbReference type="ChiTaRS" id="Leprot">
    <property type="organism name" value="mouse"/>
</dbReference>
<dbReference type="PRO" id="PR:O89013"/>
<dbReference type="Proteomes" id="UP000000589">
    <property type="component" value="Chromosome 4"/>
</dbReference>
<dbReference type="RNAct" id="O89013">
    <property type="molecule type" value="protein"/>
</dbReference>
<dbReference type="Bgee" id="ENSMUSG00000035212">
    <property type="expression patterns" value="Expressed in brain blood vessel and 266 other cell types or tissues"/>
</dbReference>
<dbReference type="GO" id="GO:0010008">
    <property type="term" value="C:endosome membrane"/>
    <property type="evidence" value="ECO:0007669"/>
    <property type="project" value="UniProtKB-SubCell"/>
</dbReference>
<dbReference type="GO" id="GO:0000139">
    <property type="term" value="C:Golgi membrane"/>
    <property type="evidence" value="ECO:0007669"/>
    <property type="project" value="UniProtKB-SubCell"/>
</dbReference>
<dbReference type="GO" id="GO:0005102">
    <property type="term" value="F:signaling receptor binding"/>
    <property type="evidence" value="ECO:0007669"/>
    <property type="project" value="Ensembl"/>
</dbReference>
<dbReference type="GO" id="GO:0060400">
    <property type="term" value="P:negative regulation of growth hormone receptor signaling pathway"/>
    <property type="evidence" value="ECO:0007669"/>
    <property type="project" value="Ensembl"/>
</dbReference>
<dbReference type="GO" id="GO:2000009">
    <property type="term" value="P:negative regulation of protein localization to cell surface"/>
    <property type="evidence" value="ECO:0007669"/>
    <property type="project" value="Ensembl"/>
</dbReference>
<dbReference type="GO" id="GO:0046426">
    <property type="term" value="P:negative regulation of receptor signaling pathway via JAK-STAT"/>
    <property type="evidence" value="ECO:0007669"/>
    <property type="project" value="Ensembl"/>
</dbReference>
<dbReference type="InterPro" id="IPR007262">
    <property type="entry name" value="Vps55/LEPROT"/>
</dbReference>
<dbReference type="PANTHER" id="PTHR12050:SF3">
    <property type="entry name" value="LEPTIN RECEPTOR GENE-RELATED PROTEIN"/>
    <property type="match status" value="1"/>
</dbReference>
<dbReference type="PANTHER" id="PTHR12050">
    <property type="entry name" value="LEPTIN RECEPTOR-RELATED"/>
    <property type="match status" value="1"/>
</dbReference>
<dbReference type="Pfam" id="PF04133">
    <property type="entry name" value="Vps55"/>
    <property type="match status" value="1"/>
</dbReference>
<organism>
    <name type="scientific">Mus musculus</name>
    <name type="common">Mouse</name>
    <dbReference type="NCBI Taxonomy" id="10090"/>
    <lineage>
        <taxon>Eukaryota</taxon>
        <taxon>Metazoa</taxon>
        <taxon>Chordata</taxon>
        <taxon>Craniata</taxon>
        <taxon>Vertebrata</taxon>
        <taxon>Euteleostomi</taxon>
        <taxon>Mammalia</taxon>
        <taxon>Eutheria</taxon>
        <taxon>Euarchontoglires</taxon>
        <taxon>Glires</taxon>
        <taxon>Rodentia</taxon>
        <taxon>Myomorpha</taxon>
        <taxon>Muroidea</taxon>
        <taxon>Muridae</taxon>
        <taxon>Murinae</taxon>
        <taxon>Mus</taxon>
        <taxon>Mus</taxon>
    </lineage>
</organism>
<comment type="function">
    <text evidence="4 5">Negatively regulates leptin receptor (LEPR) cell surface expression, and thus decreases response to leptin. Negatively regulates growth hormone (GH) receptor cell surface expression in liver. May play a role in liver resistance to GH during periods of reduced nutrient availability.</text>
</comment>
<comment type="subunit">
    <text evidence="1">Interacts with LEPR. Interacts with RAB13 (By similarity).</text>
</comment>
<comment type="subcellular location">
    <subcellularLocation>
        <location evidence="4">Golgi apparatus membrane</location>
        <topology evidence="4">Multi-pass membrane protein</topology>
    </subcellularLocation>
    <subcellularLocation>
        <location evidence="4">Endosome membrane</location>
    </subcellularLocation>
</comment>
<comment type="alternative products">
    <event type="alternative splicing"/>
    <isoform>
        <id>O89013-1</id>
        <name>1</name>
        <sequence type="displayed"/>
    </isoform>
    <isoform>
        <id>O89013-2</id>
        <name>2</name>
        <sequence type="described" ref="VSP_039718"/>
    </isoform>
</comment>
<comment type="tissue specificity">
    <text evidence="3">Widely distributed in the brain, with elevated expression in the hypothalamic regions, including the paraventricular nucleus. In the placenta, present at high levels in the junctional zone situated towards the maternal aspect and throughout the labyrinth zone in close proximity to the developing fetus.</text>
</comment>
<comment type="induction">
    <text evidence="5">Up-regulated in the liver of fasting animals.</text>
</comment>
<comment type="miscellaneous">
    <molecule>Isoform 2</molecule>
    <text evidence="7">May be due to competing acceptor splice site.</text>
</comment>
<comment type="similarity">
    <text evidence="7">Belongs to the OB-RGRP/VPS55 family.</text>
</comment>
<comment type="caution">
    <text evidence="7">This protein is encoded by the leptin receptor (LEPR) gene, but shares with LEPR only the first two 5'-UTR exons. It therefore does not share any sequence similarity with LEPR.</text>
</comment>
<accession>O89013</accession>
<accession>A2AV64</accession>
<accession>Q3TGT4</accession>
<accession>Q3TWZ2</accession>
<accession>Q545G9</accession>
<accession>Q91Z23</accession>
<keyword id="KW-0025">Alternative splicing</keyword>
<keyword id="KW-0967">Endosome</keyword>
<keyword id="KW-0333">Golgi apparatus</keyword>
<keyword id="KW-0472">Membrane</keyword>
<keyword id="KW-1185">Reference proteome</keyword>
<keyword id="KW-0812">Transmembrane</keyword>
<keyword id="KW-1133">Transmembrane helix</keyword>